<organism>
    <name type="scientific">Vibrio cholerae serotype O1 (strain ATCC 39315 / El Tor Inaba N16961)</name>
    <dbReference type="NCBI Taxonomy" id="243277"/>
    <lineage>
        <taxon>Bacteria</taxon>
        <taxon>Pseudomonadati</taxon>
        <taxon>Pseudomonadota</taxon>
        <taxon>Gammaproteobacteria</taxon>
        <taxon>Vibrionales</taxon>
        <taxon>Vibrionaceae</taxon>
        <taxon>Vibrio</taxon>
    </lineage>
</organism>
<name>XERC_VIBCH</name>
<evidence type="ECO:0000250" key="1"/>
<evidence type="ECO:0000255" key="2">
    <source>
        <dbReference type="PROSITE-ProRule" id="PRU01246"/>
    </source>
</evidence>
<evidence type="ECO:0000255" key="3">
    <source>
        <dbReference type="PROSITE-ProRule" id="PRU01248"/>
    </source>
</evidence>
<evidence type="ECO:0000305" key="4"/>
<accession>Q9KVL4</accession>
<dbReference type="EMBL" id="AE003852">
    <property type="protein sequence ID" value="AAF93305.1"/>
    <property type="molecule type" value="Genomic_DNA"/>
</dbReference>
<dbReference type="PIR" id="A82361">
    <property type="entry name" value="A82361"/>
</dbReference>
<dbReference type="RefSeq" id="NP_229786.1">
    <property type="nucleotide sequence ID" value="NC_002505.1"/>
</dbReference>
<dbReference type="RefSeq" id="WP_000786732.1">
    <property type="nucleotide sequence ID" value="NZ_LT906614.1"/>
</dbReference>
<dbReference type="SMR" id="Q9KVL4"/>
<dbReference type="STRING" id="243277.VC_0128"/>
<dbReference type="DNASU" id="2614552"/>
<dbReference type="EnsemblBacteria" id="AAF93305">
    <property type="protein sequence ID" value="AAF93305"/>
    <property type="gene ID" value="VC_0128"/>
</dbReference>
<dbReference type="KEGG" id="vch:VC_0128"/>
<dbReference type="PATRIC" id="fig|243277.26.peg.119"/>
<dbReference type="eggNOG" id="COG4973">
    <property type="taxonomic scope" value="Bacteria"/>
</dbReference>
<dbReference type="HOGENOM" id="CLU_027562_9_0_6"/>
<dbReference type="Proteomes" id="UP000000584">
    <property type="component" value="Chromosome 1"/>
</dbReference>
<dbReference type="GO" id="GO:0005737">
    <property type="term" value="C:cytoplasm"/>
    <property type="evidence" value="ECO:0007669"/>
    <property type="project" value="UniProtKB-SubCell"/>
</dbReference>
<dbReference type="GO" id="GO:0048476">
    <property type="term" value="C:Holliday junction resolvase complex"/>
    <property type="evidence" value="ECO:0000318"/>
    <property type="project" value="GO_Central"/>
</dbReference>
<dbReference type="GO" id="GO:0003677">
    <property type="term" value="F:DNA binding"/>
    <property type="evidence" value="ECO:0000318"/>
    <property type="project" value="GO_Central"/>
</dbReference>
<dbReference type="GO" id="GO:0009037">
    <property type="term" value="F:tyrosine-based site-specific recombinase activity"/>
    <property type="evidence" value="ECO:0000318"/>
    <property type="project" value="GO_Central"/>
</dbReference>
<dbReference type="GO" id="GO:0051301">
    <property type="term" value="P:cell division"/>
    <property type="evidence" value="ECO:0007669"/>
    <property type="project" value="UniProtKB-KW"/>
</dbReference>
<dbReference type="GO" id="GO:0007059">
    <property type="term" value="P:chromosome segregation"/>
    <property type="evidence" value="ECO:0000318"/>
    <property type="project" value="GO_Central"/>
</dbReference>
<dbReference type="GO" id="GO:0006310">
    <property type="term" value="P:DNA recombination"/>
    <property type="evidence" value="ECO:0000318"/>
    <property type="project" value="GO_Central"/>
</dbReference>
<dbReference type="GO" id="GO:0006313">
    <property type="term" value="P:DNA transposition"/>
    <property type="evidence" value="ECO:0007669"/>
    <property type="project" value="UniProtKB-UniRule"/>
</dbReference>
<dbReference type="GO" id="GO:0071139">
    <property type="term" value="P:resolution of DNA recombination intermediates"/>
    <property type="evidence" value="ECO:0000318"/>
    <property type="project" value="GO_Central"/>
</dbReference>
<dbReference type="CDD" id="cd00798">
    <property type="entry name" value="INT_XerDC_C"/>
    <property type="match status" value="1"/>
</dbReference>
<dbReference type="FunFam" id="1.10.443.10:FF:000002">
    <property type="entry name" value="Tyrosine recombinase XerC"/>
    <property type="match status" value="1"/>
</dbReference>
<dbReference type="Gene3D" id="1.10.150.130">
    <property type="match status" value="1"/>
</dbReference>
<dbReference type="Gene3D" id="1.10.443.10">
    <property type="entry name" value="Intergrase catalytic core"/>
    <property type="match status" value="1"/>
</dbReference>
<dbReference type="HAMAP" id="MF_01808">
    <property type="entry name" value="Recomb_XerC_XerD"/>
    <property type="match status" value="1"/>
</dbReference>
<dbReference type="InterPro" id="IPR044068">
    <property type="entry name" value="CB"/>
</dbReference>
<dbReference type="InterPro" id="IPR011010">
    <property type="entry name" value="DNA_brk_join_enz"/>
</dbReference>
<dbReference type="InterPro" id="IPR013762">
    <property type="entry name" value="Integrase-like_cat_sf"/>
</dbReference>
<dbReference type="InterPro" id="IPR002104">
    <property type="entry name" value="Integrase_catalytic"/>
</dbReference>
<dbReference type="InterPro" id="IPR010998">
    <property type="entry name" value="Integrase_recombinase_N"/>
</dbReference>
<dbReference type="InterPro" id="IPR004107">
    <property type="entry name" value="Integrase_SAM-like_N"/>
</dbReference>
<dbReference type="InterPro" id="IPR011931">
    <property type="entry name" value="Recomb_XerC"/>
</dbReference>
<dbReference type="InterPro" id="IPR023009">
    <property type="entry name" value="Tyrosine_recombinase_XerC/XerD"/>
</dbReference>
<dbReference type="InterPro" id="IPR050090">
    <property type="entry name" value="Tyrosine_recombinase_XerCD"/>
</dbReference>
<dbReference type="NCBIfam" id="TIGR02224">
    <property type="entry name" value="recomb_XerC"/>
    <property type="match status" value="1"/>
</dbReference>
<dbReference type="PANTHER" id="PTHR30349">
    <property type="entry name" value="PHAGE INTEGRASE-RELATED"/>
    <property type="match status" value="1"/>
</dbReference>
<dbReference type="PANTHER" id="PTHR30349:SF81">
    <property type="entry name" value="TYROSINE RECOMBINASE XERC"/>
    <property type="match status" value="1"/>
</dbReference>
<dbReference type="Pfam" id="PF02899">
    <property type="entry name" value="Phage_int_SAM_1"/>
    <property type="match status" value="1"/>
</dbReference>
<dbReference type="Pfam" id="PF00589">
    <property type="entry name" value="Phage_integrase"/>
    <property type="match status" value="1"/>
</dbReference>
<dbReference type="SUPFAM" id="SSF56349">
    <property type="entry name" value="DNA breaking-rejoining enzymes"/>
    <property type="match status" value="1"/>
</dbReference>
<dbReference type="SUPFAM" id="SSF47823">
    <property type="entry name" value="lambda integrase-like, N-terminal domain"/>
    <property type="match status" value="1"/>
</dbReference>
<dbReference type="PROSITE" id="PS51900">
    <property type="entry name" value="CB"/>
    <property type="match status" value="1"/>
</dbReference>
<dbReference type="PROSITE" id="PS51898">
    <property type="entry name" value="TYR_RECOMBINASE"/>
    <property type="match status" value="1"/>
</dbReference>
<feature type="chain" id="PRO_0000095344" description="Tyrosine recombinase XerC">
    <location>
        <begin position="1"/>
        <end position="311"/>
    </location>
</feature>
<feature type="domain" description="Core-binding (CB)" evidence="3">
    <location>
        <begin position="11"/>
        <end position="97"/>
    </location>
</feature>
<feature type="domain" description="Tyr recombinase" evidence="2">
    <location>
        <begin position="118"/>
        <end position="298"/>
    </location>
</feature>
<feature type="active site" evidence="2">
    <location>
        <position position="157"/>
    </location>
</feature>
<feature type="active site" evidence="2">
    <location>
        <position position="181"/>
    </location>
</feature>
<feature type="active site" evidence="2">
    <location>
        <position position="250"/>
    </location>
</feature>
<feature type="active site" evidence="2">
    <location>
        <position position="253"/>
    </location>
</feature>
<feature type="active site" evidence="2">
    <location>
        <position position="276"/>
    </location>
</feature>
<feature type="active site" description="O-(3'-phospho-DNA)-tyrosine intermediate" evidence="2">
    <location>
        <position position="285"/>
    </location>
</feature>
<reference key="1">
    <citation type="journal article" date="2000" name="Nature">
        <title>DNA sequence of both chromosomes of the cholera pathogen Vibrio cholerae.</title>
        <authorList>
            <person name="Heidelberg J.F."/>
            <person name="Eisen J.A."/>
            <person name="Nelson W.C."/>
            <person name="Clayton R.A."/>
            <person name="Gwinn M.L."/>
            <person name="Dodson R.J."/>
            <person name="Haft D.H."/>
            <person name="Hickey E.K."/>
            <person name="Peterson J.D."/>
            <person name="Umayam L.A."/>
            <person name="Gill S.R."/>
            <person name="Nelson K.E."/>
            <person name="Read T.D."/>
            <person name="Tettelin H."/>
            <person name="Richardson D.L."/>
            <person name="Ermolaeva M.D."/>
            <person name="Vamathevan J.J."/>
            <person name="Bass S."/>
            <person name="Qin H."/>
            <person name="Dragoi I."/>
            <person name="Sellers P."/>
            <person name="McDonald L.A."/>
            <person name="Utterback T.R."/>
            <person name="Fleischmann R.D."/>
            <person name="Nierman W.C."/>
            <person name="White O."/>
            <person name="Salzberg S.L."/>
            <person name="Smith H.O."/>
            <person name="Colwell R.R."/>
            <person name="Mekalanos J.J."/>
            <person name="Venter J.C."/>
            <person name="Fraser C.M."/>
        </authorList>
    </citation>
    <scope>NUCLEOTIDE SEQUENCE [LARGE SCALE GENOMIC DNA]</scope>
    <source>
        <strain>ATCC 39315 / El Tor Inaba N16961</strain>
    </source>
</reference>
<reference key="2">
    <citation type="journal article" date="2002" name="Nature">
        <title>Filamentous phage integration requires the host recombinases XerC and XerD.</title>
        <authorList>
            <person name="Huber K.E."/>
            <person name="Waldor M.K."/>
        </authorList>
    </citation>
    <scope>BACTERIOPHAGE INFECTION</scope>
</reference>
<proteinExistence type="inferred from homology"/>
<keyword id="KW-0131">Cell cycle</keyword>
<keyword id="KW-0132">Cell division</keyword>
<keyword id="KW-0159">Chromosome partition</keyword>
<keyword id="KW-0963">Cytoplasm</keyword>
<keyword id="KW-0229">DNA integration</keyword>
<keyword id="KW-0233">DNA recombination</keyword>
<keyword id="KW-0238">DNA-binding</keyword>
<keyword id="KW-1185">Reference proteome</keyword>
<sequence>MKNDERTPLPDALAQPLERFYAYLHTEKGLSLYTQRNYKQQLETMTQYLVQVGLTHWTQLDSAWVRQLVMQGKRQGMKASSIATRLSSLRSFLDFLILRGELQANPAKGVSAPRKQRTLPKNLDVDEMAQLLEVTDDDPLSIRDRAIMELMYGAGLRLAELVSIDIKDVNLSEGEIRVIGKGNKERKVWFAGQAQEWVGKWLKLRSQLADSAETALFVSKLGTRISHRSVQKRMAEWGQKQAVASHISPHKLRHSFATHMLESSNNLRAVQELLGHENIATTQIYTHLDFQHLAQVYDQAHPRARKKNKDD</sequence>
<comment type="function">
    <text evidence="1">Site-specific tyrosine recombinase, which acts by catalyzing the cutting and rejoining of the recombining DNA molecules. The XerC-XerD complex is essential to convert dimers of the bacterial chromosome into monomers to permit their segregation at cell division. It also contributes to the segregational stability of plasmids (By similarity).</text>
</comment>
<comment type="subunit">
    <text evidence="1">Forms a cyclic heterotetrameric complex composed of two molecules of XerC and two molecules of XerD.</text>
</comment>
<comment type="subcellular location">
    <subcellularLocation>
        <location evidence="1">Cytoplasm</location>
    </subcellularLocation>
</comment>
<comment type="miscellaneous">
    <text>During infection by the bacteriophage CTX-phi, it is required by the bacteriophage, which uses host XerC and XerD proteins to integrate the bacterial genome.</text>
</comment>
<comment type="similarity">
    <text evidence="4">Belongs to the 'phage' integrase family. XerC subfamily.</text>
</comment>
<gene>
    <name type="primary">xerC</name>
    <name type="ordered locus">VC_0128</name>
</gene>
<protein>
    <recommendedName>
        <fullName>Tyrosine recombinase XerC</fullName>
    </recommendedName>
</protein>